<sequence length="402" mass="43321">MKRLWQHCHAATLRNGKYSIVEDAVLVTDGPLIHWIGPRAELPPGDYAERIDLGGAWLTPGLIDCHTHAVFGGNRSGEFEQRLEGVSYAEIATAGGGIASTVRATREASEEELLASARKRLDPLLRDGVTALEIKSGYGLDLASEAKMLRVIRRLGEQLPATVRSTCLAAHALPPEYAGRADDYIGHVCTTILPALAKEGLVDAVDAFCEHLAFSPAQVERVFIAARELGLPVKLHAEQLSSLHGSSLAARYQALSADHLEYMTEEDARAMGAAGTVAVLLPGAFYLLRETRLPPIDALRRHGVAMAVASDLNPGTSPALSLRLMLNMACTLFRLTPEEALAGVTLHAARALGLEASHGSLEAGKLADFVAWEIERPAELAYWLGGDLPKRVIRHAEEVYRG</sequence>
<proteinExistence type="inferred from homology"/>
<name>HUTI_PSEP7</name>
<organism>
    <name type="scientific">Pseudomonas paraeruginosa (strain DSM 24068 / PA7)</name>
    <name type="common">Pseudomonas aeruginosa (strain PA7)</name>
    <dbReference type="NCBI Taxonomy" id="381754"/>
    <lineage>
        <taxon>Bacteria</taxon>
        <taxon>Pseudomonadati</taxon>
        <taxon>Pseudomonadota</taxon>
        <taxon>Gammaproteobacteria</taxon>
        <taxon>Pseudomonadales</taxon>
        <taxon>Pseudomonadaceae</taxon>
        <taxon>Pseudomonas</taxon>
        <taxon>Pseudomonas paraeruginosa</taxon>
    </lineage>
</organism>
<accession>A6VDL0</accession>
<reference key="1">
    <citation type="submission" date="2007-06" db="EMBL/GenBank/DDBJ databases">
        <authorList>
            <person name="Dodson R.J."/>
            <person name="Harkins D."/>
            <person name="Paulsen I.T."/>
        </authorList>
    </citation>
    <scope>NUCLEOTIDE SEQUENCE [LARGE SCALE GENOMIC DNA]</scope>
    <source>
        <strain>DSM 24068 / PA7</strain>
    </source>
</reference>
<gene>
    <name evidence="1" type="primary">hutI</name>
    <name type="ordered locus">PSPA7_5826</name>
</gene>
<dbReference type="EC" id="3.5.2.7" evidence="1"/>
<dbReference type="EMBL" id="CP000744">
    <property type="protein sequence ID" value="ABR86369.1"/>
    <property type="molecule type" value="Genomic_DNA"/>
</dbReference>
<dbReference type="RefSeq" id="WP_012077752.1">
    <property type="nucleotide sequence ID" value="NC_009656.1"/>
</dbReference>
<dbReference type="SMR" id="A6VDL0"/>
<dbReference type="KEGG" id="pap:PSPA7_5826"/>
<dbReference type="HOGENOM" id="CLU_041647_0_0_6"/>
<dbReference type="UniPathway" id="UPA00379">
    <property type="reaction ID" value="UER00551"/>
</dbReference>
<dbReference type="Proteomes" id="UP000001582">
    <property type="component" value="Chromosome"/>
</dbReference>
<dbReference type="GO" id="GO:0005737">
    <property type="term" value="C:cytoplasm"/>
    <property type="evidence" value="ECO:0007669"/>
    <property type="project" value="UniProtKB-SubCell"/>
</dbReference>
<dbReference type="GO" id="GO:0050480">
    <property type="term" value="F:imidazolonepropionase activity"/>
    <property type="evidence" value="ECO:0007669"/>
    <property type="project" value="UniProtKB-UniRule"/>
</dbReference>
<dbReference type="GO" id="GO:0005506">
    <property type="term" value="F:iron ion binding"/>
    <property type="evidence" value="ECO:0007669"/>
    <property type="project" value="UniProtKB-UniRule"/>
</dbReference>
<dbReference type="GO" id="GO:0008270">
    <property type="term" value="F:zinc ion binding"/>
    <property type="evidence" value="ECO:0007669"/>
    <property type="project" value="UniProtKB-UniRule"/>
</dbReference>
<dbReference type="GO" id="GO:0019556">
    <property type="term" value="P:L-histidine catabolic process to glutamate and formamide"/>
    <property type="evidence" value="ECO:0007669"/>
    <property type="project" value="UniProtKB-UniPathway"/>
</dbReference>
<dbReference type="GO" id="GO:0019557">
    <property type="term" value="P:L-histidine catabolic process to glutamate and formate"/>
    <property type="evidence" value="ECO:0007669"/>
    <property type="project" value="UniProtKB-UniPathway"/>
</dbReference>
<dbReference type="CDD" id="cd01296">
    <property type="entry name" value="Imidazolone-5PH"/>
    <property type="match status" value="1"/>
</dbReference>
<dbReference type="FunFam" id="3.20.20.140:FF:000007">
    <property type="entry name" value="Imidazolonepropionase"/>
    <property type="match status" value="1"/>
</dbReference>
<dbReference type="Gene3D" id="3.20.20.140">
    <property type="entry name" value="Metal-dependent hydrolases"/>
    <property type="match status" value="1"/>
</dbReference>
<dbReference type="Gene3D" id="2.30.40.10">
    <property type="entry name" value="Urease, subunit C, domain 1"/>
    <property type="match status" value="1"/>
</dbReference>
<dbReference type="HAMAP" id="MF_00372">
    <property type="entry name" value="HutI"/>
    <property type="match status" value="1"/>
</dbReference>
<dbReference type="InterPro" id="IPR006680">
    <property type="entry name" value="Amidohydro-rel"/>
</dbReference>
<dbReference type="InterPro" id="IPR005920">
    <property type="entry name" value="HutI"/>
</dbReference>
<dbReference type="InterPro" id="IPR011059">
    <property type="entry name" value="Metal-dep_hydrolase_composite"/>
</dbReference>
<dbReference type="InterPro" id="IPR032466">
    <property type="entry name" value="Metal_Hydrolase"/>
</dbReference>
<dbReference type="NCBIfam" id="TIGR01224">
    <property type="entry name" value="hutI"/>
    <property type="match status" value="1"/>
</dbReference>
<dbReference type="PANTHER" id="PTHR42752">
    <property type="entry name" value="IMIDAZOLONEPROPIONASE"/>
    <property type="match status" value="1"/>
</dbReference>
<dbReference type="PANTHER" id="PTHR42752:SF1">
    <property type="entry name" value="IMIDAZOLONEPROPIONASE-RELATED"/>
    <property type="match status" value="1"/>
</dbReference>
<dbReference type="Pfam" id="PF01979">
    <property type="entry name" value="Amidohydro_1"/>
    <property type="match status" value="1"/>
</dbReference>
<dbReference type="SUPFAM" id="SSF51338">
    <property type="entry name" value="Composite domain of metallo-dependent hydrolases"/>
    <property type="match status" value="1"/>
</dbReference>
<dbReference type="SUPFAM" id="SSF51556">
    <property type="entry name" value="Metallo-dependent hydrolases"/>
    <property type="match status" value="1"/>
</dbReference>
<protein>
    <recommendedName>
        <fullName evidence="1">Imidazolonepropionase</fullName>
        <ecNumber evidence="1">3.5.2.7</ecNumber>
    </recommendedName>
    <alternativeName>
        <fullName evidence="1">Imidazolone-5-propionate hydrolase</fullName>
    </alternativeName>
</protein>
<feature type="chain" id="PRO_1000007145" description="Imidazolonepropionase">
    <location>
        <begin position="1"/>
        <end position="402"/>
    </location>
</feature>
<feature type="binding site" evidence="1">
    <location>
        <position position="66"/>
    </location>
    <ligand>
        <name>Fe(3+)</name>
        <dbReference type="ChEBI" id="CHEBI:29034"/>
    </ligand>
</feature>
<feature type="binding site" evidence="1">
    <location>
        <position position="66"/>
    </location>
    <ligand>
        <name>Zn(2+)</name>
        <dbReference type="ChEBI" id="CHEBI:29105"/>
    </ligand>
</feature>
<feature type="binding site" evidence="1">
    <location>
        <position position="68"/>
    </location>
    <ligand>
        <name>Fe(3+)</name>
        <dbReference type="ChEBI" id="CHEBI:29034"/>
    </ligand>
</feature>
<feature type="binding site" evidence="1">
    <location>
        <position position="68"/>
    </location>
    <ligand>
        <name>Zn(2+)</name>
        <dbReference type="ChEBI" id="CHEBI:29105"/>
    </ligand>
</feature>
<feature type="binding site" evidence="1">
    <location>
        <position position="75"/>
    </location>
    <ligand>
        <name>4-imidazolone-5-propanoate</name>
        <dbReference type="ChEBI" id="CHEBI:77893"/>
    </ligand>
</feature>
<feature type="binding site" evidence="1">
    <location>
        <position position="138"/>
    </location>
    <ligand>
        <name>4-imidazolone-5-propanoate</name>
        <dbReference type="ChEBI" id="CHEBI:77893"/>
    </ligand>
</feature>
<feature type="binding site" evidence="1">
    <location>
        <position position="138"/>
    </location>
    <ligand>
        <name>N-formimidoyl-L-glutamate</name>
        <dbReference type="ChEBI" id="CHEBI:58928"/>
    </ligand>
</feature>
<feature type="binding site" evidence="1">
    <location>
        <position position="171"/>
    </location>
    <ligand>
        <name>4-imidazolone-5-propanoate</name>
        <dbReference type="ChEBI" id="CHEBI:77893"/>
    </ligand>
</feature>
<feature type="binding site" evidence="1">
    <location>
        <position position="236"/>
    </location>
    <ligand>
        <name>Fe(3+)</name>
        <dbReference type="ChEBI" id="CHEBI:29034"/>
    </ligand>
</feature>
<feature type="binding site" evidence="1">
    <location>
        <position position="236"/>
    </location>
    <ligand>
        <name>Zn(2+)</name>
        <dbReference type="ChEBI" id="CHEBI:29105"/>
    </ligand>
</feature>
<feature type="binding site" evidence="1">
    <location>
        <position position="239"/>
    </location>
    <ligand>
        <name>4-imidazolone-5-propanoate</name>
        <dbReference type="ChEBI" id="CHEBI:77893"/>
    </ligand>
</feature>
<feature type="binding site" evidence="1">
    <location>
        <position position="311"/>
    </location>
    <ligand>
        <name>Fe(3+)</name>
        <dbReference type="ChEBI" id="CHEBI:29034"/>
    </ligand>
</feature>
<feature type="binding site" evidence="1">
    <location>
        <position position="311"/>
    </location>
    <ligand>
        <name>Zn(2+)</name>
        <dbReference type="ChEBI" id="CHEBI:29105"/>
    </ligand>
</feature>
<feature type="binding site" evidence="1">
    <location>
        <position position="313"/>
    </location>
    <ligand>
        <name>N-formimidoyl-L-glutamate</name>
        <dbReference type="ChEBI" id="CHEBI:58928"/>
    </ligand>
</feature>
<feature type="binding site" evidence="1">
    <location>
        <position position="315"/>
    </location>
    <ligand>
        <name>N-formimidoyl-L-glutamate</name>
        <dbReference type="ChEBI" id="CHEBI:58928"/>
    </ligand>
</feature>
<feature type="binding site" evidence="1">
    <location>
        <position position="316"/>
    </location>
    <ligand>
        <name>4-imidazolone-5-propanoate</name>
        <dbReference type="ChEBI" id="CHEBI:77893"/>
    </ligand>
</feature>
<keyword id="KW-0963">Cytoplasm</keyword>
<keyword id="KW-0369">Histidine metabolism</keyword>
<keyword id="KW-0378">Hydrolase</keyword>
<keyword id="KW-0408">Iron</keyword>
<keyword id="KW-0479">Metal-binding</keyword>
<keyword id="KW-0862">Zinc</keyword>
<evidence type="ECO:0000255" key="1">
    <source>
        <dbReference type="HAMAP-Rule" id="MF_00372"/>
    </source>
</evidence>
<comment type="function">
    <text evidence="1">Catalyzes the hydrolytic cleavage of the carbon-nitrogen bond in imidazolone-5-propanoate to yield N-formimidoyl-L-glutamate. It is the third step in the universal histidine degradation pathway.</text>
</comment>
<comment type="catalytic activity">
    <reaction evidence="1">
        <text>4-imidazolone-5-propanoate + H2O = N-formimidoyl-L-glutamate</text>
        <dbReference type="Rhea" id="RHEA:23660"/>
        <dbReference type="ChEBI" id="CHEBI:15377"/>
        <dbReference type="ChEBI" id="CHEBI:58928"/>
        <dbReference type="ChEBI" id="CHEBI:77893"/>
        <dbReference type="EC" id="3.5.2.7"/>
    </reaction>
</comment>
<comment type="cofactor">
    <cofactor evidence="1">
        <name>Zn(2+)</name>
        <dbReference type="ChEBI" id="CHEBI:29105"/>
    </cofactor>
    <cofactor evidence="1">
        <name>Fe(3+)</name>
        <dbReference type="ChEBI" id="CHEBI:29034"/>
    </cofactor>
    <text evidence="1">Binds 1 zinc or iron ion per subunit.</text>
</comment>
<comment type="pathway">
    <text evidence="1">Amino-acid degradation; L-histidine degradation into L-glutamate; N-formimidoyl-L-glutamate from L-histidine: step 3/3.</text>
</comment>
<comment type="subcellular location">
    <subcellularLocation>
        <location evidence="1">Cytoplasm</location>
    </subcellularLocation>
</comment>
<comment type="similarity">
    <text evidence="1">Belongs to the metallo-dependent hydrolases superfamily. HutI family.</text>
</comment>